<organism>
    <name type="scientific">Salmonella schwarzengrund (strain CVM19633)</name>
    <dbReference type="NCBI Taxonomy" id="439843"/>
    <lineage>
        <taxon>Bacteria</taxon>
        <taxon>Pseudomonadati</taxon>
        <taxon>Pseudomonadota</taxon>
        <taxon>Gammaproteobacteria</taxon>
        <taxon>Enterobacterales</taxon>
        <taxon>Enterobacteriaceae</taxon>
        <taxon>Salmonella</taxon>
    </lineage>
</organism>
<evidence type="ECO:0000255" key="1">
    <source>
        <dbReference type="HAMAP-Rule" id="MF_01587"/>
    </source>
</evidence>
<feature type="chain" id="PRO_1000147733" description="DNA ligase B">
    <location>
        <begin position="1"/>
        <end position="561"/>
    </location>
</feature>
<feature type="active site" description="N6-AMP-lysine intermediate" evidence="1">
    <location>
        <position position="125"/>
    </location>
</feature>
<accession>B4TZZ8</accession>
<proteinExistence type="inferred from homology"/>
<name>LIGB_SALSV</name>
<dbReference type="EC" id="6.5.1.2" evidence="1"/>
<dbReference type="EMBL" id="CP001127">
    <property type="protein sequence ID" value="ACF89045.1"/>
    <property type="molecule type" value="Genomic_DNA"/>
</dbReference>
<dbReference type="RefSeq" id="WP_001241828.1">
    <property type="nucleotide sequence ID" value="NC_011094.1"/>
</dbReference>
<dbReference type="SMR" id="B4TZZ8"/>
<dbReference type="KEGG" id="sew:SeSA_A3947"/>
<dbReference type="HOGENOM" id="CLU_489786_0_0_6"/>
<dbReference type="Proteomes" id="UP000001865">
    <property type="component" value="Chromosome"/>
</dbReference>
<dbReference type="GO" id="GO:0003911">
    <property type="term" value="F:DNA ligase (NAD+) activity"/>
    <property type="evidence" value="ECO:0007669"/>
    <property type="project" value="UniProtKB-UniRule"/>
</dbReference>
<dbReference type="GO" id="GO:0006281">
    <property type="term" value="P:DNA repair"/>
    <property type="evidence" value="ECO:0007669"/>
    <property type="project" value="UniProtKB-KW"/>
</dbReference>
<dbReference type="GO" id="GO:0006260">
    <property type="term" value="P:DNA replication"/>
    <property type="evidence" value="ECO:0007669"/>
    <property type="project" value="UniProtKB-KW"/>
</dbReference>
<dbReference type="FunFam" id="1.10.287.610:FF:000003">
    <property type="entry name" value="DNA ligase B"/>
    <property type="match status" value="1"/>
</dbReference>
<dbReference type="FunFam" id="2.40.50.140:FF:000139">
    <property type="entry name" value="DNA ligase B"/>
    <property type="match status" value="1"/>
</dbReference>
<dbReference type="FunFam" id="3.30.470.30:FF:000007">
    <property type="entry name" value="DNA ligase B"/>
    <property type="match status" value="1"/>
</dbReference>
<dbReference type="Gene3D" id="1.10.150.20">
    <property type="entry name" value="5' to 3' exonuclease, C-terminal subdomain"/>
    <property type="match status" value="1"/>
</dbReference>
<dbReference type="Gene3D" id="3.30.470.30">
    <property type="entry name" value="DNA ligase/mRNA capping enzyme"/>
    <property type="match status" value="1"/>
</dbReference>
<dbReference type="Gene3D" id="1.10.287.610">
    <property type="entry name" value="Helix hairpin bin"/>
    <property type="match status" value="1"/>
</dbReference>
<dbReference type="Gene3D" id="2.40.50.140">
    <property type="entry name" value="Nucleic acid-binding proteins"/>
    <property type="match status" value="1"/>
</dbReference>
<dbReference type="HAMAP" id="MF_01587">
    <property type="entry name" value="DNA_ligase_B"/>
    <property type="match status" value="1"/>
</dbReference>
<dbReference type="InterPro" id="IPR018239">
    <property type="entry name" value="DNA_ligase_AS"/>
</dbReference>
<dbReference type="InterPro" id="IPR020923">
    <property type="entry name" value="DNA_ligase_B"/>
</dbReference>
<dbReference type="InterPro" id="IPR033136">
    <property type="entry name" value="DNA_ligase_CS"/>
</dbReference>
<dbReference type="InterPro" id="IPR013839">
    <property type="entry name" value="DNAligase_adenylation"/>
</dbReference>
<dbReference type="InterPro" id="IPR013840">
    <property type="entry name" value="DNAligase_N"/>
</dbReference>
<dbReference type="InterPro" id="IPR012340">
    <property type="entry name" value="NA-bd_OB-fold"/>
</dbReference>
<dbReference type="InterPro" id="IPR050326">
    <property type="entry name" value="NAD_dep_DNA_ligaseB"/>
</dbReference>
<dbReference type="InterPro" id="IPR004150">
    <property type="entry name" value="NAD_DNA_ligase_OB"/>
</dbReference>
<dbReference type="InterPro" id="IPR010994">
    <property type="entry name" value="RuvA_2-like"/>
</dbReference>
<dbReference type="NCBIfam" id="NF005987">
    <property type="entry name" value="PRK08097.1"/>
    <property type="match status" value="1"/>
</dbReference>
<dbReference type="PANTHER" id="PTHR47810">
    <property type="entry name" value="DNA LIGASE"/>
    <property type="match status" value="1"/>
</dbReference>
<dbReference type="PANTHER" id="PTHR47810:SF1">
    <property type="entry name" value="DNA LIGASE B"/>
    <property type="match status" value="1"/>
</dbReference>
<dbReference type="Pfam" id="PF01653">
    <property type="entry name" value="DNA_ligase_aden"/>
    <property type="match status" value="1"/>
</dbReference>
<dbReference type="Pfam" id="PF03120">
    <property type="entry name" value="DNA_ligase_OB"/>
    <property type="match status" value="1"/>
</dbReference>
<dbReference type="SMART" id="SM00532">
    <property type="entry name" value="LIGANc"/>
    <property type="match status" value="1"/>
</dbReference>
<dbReference type="SUPFAM" id="SSF56091">
    <property type="entry name" value="DNA ligase/mRNA capping enzyme, catalytic domain"/>
    <property type="match status" value="1"/>
</dbReference>
<dbReference type="SUPFAM" id="SSF50249">
    <property type="entry name" value="Nucleic acid-binding proteins"/>
    <property type="match status" value="1"/>
</dbReference>
<dbReference type="SUPFAM" id="SSF47781">
    <property type="entry name" value="RuvA domain 2-like"/>
    <property type="match status" value="1"/>
</dbReference>
<dbReference type="PROSITE" id="PS01055">
    <property type="entry name" value="DNA_LIGASE_N1"/>
    <property type="match status" value="1"/>
</dbReference>
<dbReference type="PROSITE" id="PS01056">
    <property type="entry name" value="DNA_LIGASE_N2"/>
    <property type="match status" value="1"/>
</dbReference>
<gene>
    <name evidence="1" type="primary">ligB</name>
    <name type="ordered locus">SeSA_A3947</name>
</gene>
<sequence length="561" mass="62795">MRLWKSMAWGILLWHSQSGALCPAWPPARAAEEIARLQQQLADWNDIYWKQGVSAVDDSVYDQLSARLVQWQRCVGQDVSSTPVSPPLNGTTMHPVAHTGVRKLADRQAVEQWMRGRSELWVQPKVDGVAVTLVYQNGKLARAISRGNGLQGEDWTPKIRLIPSIPQTTQGALANAVLQGEIFLQREGHIQQRMGGMNARSKVAGMLMRQDNASALNSLGIFIWAWPDGPANMPERLSQLAKAGFSLTKKYTLAVKDASEVERARQSWLTSALPFVTDGVVIRMAKEPAAQYWRPGQGDWLAAWKYPPVAQVAQVSAIQFSVGKSGKITVVASLVPVILDDKRVQRVNIGSVKRWEAWDIAPGDQILVSLAGQGIPRLDEVVWRSRERSKPVPPDSHFNSLTCFYASATCQEQFISRLVWLGSRSALGLDGMGEASWRALHQTHRFEHIFSWLALTSAQIANTPGFAKGKSEQIWRQFNLARRQSFTRWIMAMDIPLTQAALQASGDRSWEQLLMRTEQHWRQLPATGERRAGRVIDWRDNPQIKALSRWLSAQHIPGFGS</sequence>
<protein>
    <recommendedName>
        <fullName evidence="1">DNA ligase B</fullName>
        <ecNumber evidence="1">6.5.1.2</ecNumber>
    </recommendedName>
    <alternativeName>
        <fullName evidence="1">Polydeoxyribonucleotide synthase [NAD(+)] B</fullName>
    </alternativeName>
</protein>
<keyword id="KW-0227">DNA damage</keyword>
<keyword id="KW-0234">DNA repair</keyword>
<keyword id="KW-0235">DNA replication</keyword>
<keyword id="KW-0436">Ligase</keyword>
<keyword id="KW-0520">NAD</keyword>
<reference key="1">
    <citation type="journal article" date="2011" name="J. Bacteriol.">
        <title>Comparative genomics of 28 Salmonella enterica isolates: evidence for CRISPR-mediated adaptive sublineage evolution.</title>
        <authorList>
            <person name="Fricke W.F."/>
            <person name="Mammel M.K."/>
            <person name="McDermott P.F."/>
            <person name="Tartera C."/>
            <person name="White D.G."/>
            <person name="Leclerc J.E."/>
            <person name="Ravel J."/>
            <person name="Cebula T.A."/>
        </authorList>
    </citation>
    <scope>NUCLEOTIDE SEQUENCE [LARGE SCALE GENOMIC DNA]</scope>
    <source>
        <strain>CVM19633</strain>
    </source>
</reference>
<comment type="function">
    <text evidence="1">Catalyzes the formation of phosphodiester linkages between 5'-phosphoryl and 3'-hydroxyl groups in double-stranded DNA using NAD as a coenzyme and as the energy source for the reaction.</text>
</comment>
<comment type="catalytic activity">
    <reaction evidence="1">
        <text>NAD(+) + (deoxyribonucleotide)n-3'-hydroxyl + 5'-phospho-(deoxyribonucleotide)m = (deoxyribonucleotide)n+m + AMP + beta-nicotinamide D-nucleotide.</text>
        <dbReference type="EC" id="6.5.1.2"/>
    </reaction>
</comment>
<comment type="similarity">
    <text evidence="1">Belongs to the NAD-dependent DNA ligase family. LigB subfamily.</text>
</comment>